<proteinExistence type="uncertain"/>
<reference key="1">
    <citation type="journal article" date="1997" name="Nature">
        <title>The nucleotide sequence of Saccharomyces cerevisiae chromosome XIII.</title>
        <authorList>
            <person name="Bowman S."/>
            <person name="Churcher C.M."/>
            <person name="Badcock K."/>
            <person name="Brown D."/>
            <person name="Chillingworth T."/>
            <person name="Connor R."/>
            <person name="Dedman K."/>
            <person name="Devlin K."/>
            <person name="Gentles S."/>
            <person name="Hamlin N."/>
            <person name="Hunt S."/>
            <person name="Jagels K."/>
            <person name="Lye G."/>
            <person name="Moule S."/>
            <person name="Odell C."/>
            <person name="Pearson D."/>
            <person name="Rajandream M.A."/>
            <person name="Rice P."/>
            <person name="Skelton J."/>
            <person name="Walsh S.V."/>
            <person name="Whitehead S."/>
            <person name="Barrell B.G."/>
        </authorList>
    </citation>
    <scope>NUCLEOTIDE SEQUENCE [LARGE SCALE GENOMIC DNA]</scope>
    <source>
        <strain>ATCC 204508 / S288c</strain>
    </source>
</reference>
<reference key="2">
    <citation type="journal article" date="2014" name="G3 (Bethesda)">
        <title>The reference genome sequence of Saccharomyces cerevisiae: Then and now.</title>
        <authorList>
            <person name="Engel S.R."/>
            <person name="Dietrich F.S."/>
            <person name="Fisk D.G."/>
            <person name="Binkley G."/>
            <person name="Balakrishnan R."/>
            <person name="Costanzo M.C."/>
            <person name="Dwight S.S."/>
            <person name="Hitz B.C."/>
            <person name="Karra K."/>
            <person name="Nash R.S."/>
            <person name="Weng S."/>
            <person name="Wong E.D."/>
            <person name="Lloyd P."/>
            <person name="Skrzypek M.S."/>
            <person name="Miyasato S.R."/>
            <person name="Simison M."/>
            <person name="Cherry J.M."/>
        </authorList>
    </citation>
    <scope>GENOME REANNOTATION</scope>
    <source>
        <strain>ATCC 204508 / S288c</strain>
    </source>
</reference>
<name>YM153_YEAST</name>
<protein>
    <recommendedName>
        <fullName evidence="1">Putative uncharacterized protein YMR153C-A</fullName>
    </recommendedName>
</protein>
<accession>A0A023PYJ4</accession>
<dbReference type="EMBL" id="KJ412290">
    <property type="protein sequence ID" value="AHX39333.1"/>
    <property type="molecule type" value="Genomic_DNA"/>
</dbReference>
<dbReference type="PIR" id="S69867">
    <property type="entry name" value="S69867"/>
</dbReference>
<dbReference type="PaxDb" id="4932-YMR153C-A"/>
<dbReference type="EnsemblFungi" id="YMR153C-A_mRNA">
    <property type="protein sequence ID" value="YMR153C-A"/>
    <property type="gene ID" value="YMR153C-A"/>
</dbReference>
<dbReference type="AGR" id="SGD:S000004761"/>
<dbReference type="SGD" id="S000004761">
    <property type="gene designation" value="YMR153C-A"/>
</dbReference>
<dbReference type="HOGENOM" id="CLU_2159852_0_0_1"/>
<evidence type="ECO:0000305" key="1"/>
<evidence type="ECO:0000305" key="2">
    <source>
    </source>
</evidence>
<evidence type="ECO:0000312" key="3">
    <source>
        <dbReference type="SGD" id="S000004761"/>
    </source>
</evidence>
<comment type="miscellaneous">
    <text evidence="1">Partially overlaps NUP53.</text>
</comment>
<comment type="caution">
    <text evidence="2">Product of a dubious gene prediction unlikely to encode a functional protein. Because of that it is not part of the S.cerevisiae S288c complete/reference proteome set.</text>
</comment>
<sequence length="111" mass="12887">MLESHQSTTFGGKVFHYKSFHPNNQLFNLFNQLFLLLLACSLFFKSDSIELRTPLWIFPLFLKNNERPSFISSLRGFLKEVEFLETLNSALRTFEVTAFALAFSKIPSVFL</sequence>
<feature type="chain" id="PRO_0000431056" description="Putative uncharacterized protein YMR153C-A">
    <location>
        <begin position="1"/>
        <end position="111"/>
    </location>
</feature>
<gene>
    <name evidence="3" type="ordered locus">YMR153C-A</name>
</gene>
<organism>
    <name type="scientific">Saccharomyces cerevisiae (strain ATCC 204508 / S288c)</name>
    <name type="common">Baker's yeast</name>
    <dbReference type="NCBI Taxonomy" id="559292"/>
    <lineage>
        <taxon>Eukaryota</taxon>
        <taxon>Fungi</taxon>
        <taxon>Dikarya</taxon>
        <taxon>Ascomycota</taxon>
        <taxon>Saccharomycotina</taxon>
        <taxon>Saccharomycetes</taxon>
        <taxon>Saccharomycetales</taxon>
        <taxon>Saccharomycetaceae</taxon>
        <taxon>Saccharomyces</taxon>
    </lineage>
</organism>